<gene>
    <name type="primary">celCCF</name>
    <name type="ordered locus">Ccel_0729</name>
</gene>
<dbReference type="EC" id="3.2.1.4"/>
<dbReference type="EMBL" id="U30321">
    <property type="protein sequence ID" value="AAB41452.1"/>
    <property type="molecule type" value="Genomic_DNA"/>
</dbReference>
<dbReference type="EMBL" id="CP001348">
    <property type="protein sequence ID" value="ACL75108.1"/>
    <property type="molecule type" value="Genomic_DNA"/>
</dbReference>
<dbReference type="EMBL" id="M87018">
    <property type="protein sequence ID" value="AAA73866.1"/>
    <property type="molecule type" value="Genomic_DNA"/>
</dbReference>
<dbReference type="PIR" id="PC1139">
    <property type="entry name" value="PC1139"/>
</dbReference>
<dbReference type="RefSeq" id="WP_015924275.1">
    <property type="nucleotide sequence ID" value="NC_011898.1"/>
</dbReference>
<dbReference type="PDB" id="1F9D">
    <property type="method" value="X-ray"/>
    <property type="resolution" value="2.30 A"/>
    <property type="chains" value="A=30-658"/>
</dbReference>
<dbReference type="PDB" id="1F9O">
    <property type="method" value="X-ray"/>
    <property type="resolution" value="2.50 A"/>
    <property type="chains" value="A=30-658"/>
</dbReference>
<dbReference type="PDB" id="1FAE">
    <property type="method" value="X-ray"/>
    <property type="resolution" value="2.00 A"/>
    <property type="chains" value="A=30-658"/>
</dbReference>
<dbReference type="PDB" id="1FBO">
    <property type="method" value="X-ray"/>
    <property type="resolution" value="2.30 A"/>
    <property type="chains" value="A=30-658"/>
</dbReference>
<dbReference type="PDB" id="1FBW">
    <property type="method" value="X-ray"/>
    <property type="resolution" value="2.00 A"/>
    <property type="chains" value="A=30-658"/>
</dbReference>
<dbReference type="PDB" id="1FCE">
    <property type="method" value="X-ray"/>
    <property type="resolution" value="2.00 A"/>
    <property type="chains" value="A=30-658"/>
</dbReference>
<dbReference type="PDB" id="1G9G">
    <property type="method" value="X-ray"/>
    <property type="resolution" value="1.90 A"/>
    <property type="chains" value="A=30-658"/>
</dbReference>
<dbReference type="PDB" id="1G9J">
    <property type="method" value="X-ray"/>
    <property type="resolution" value="1.90 A"/>
    <property type="chains" value="A=30-658"/>
</dbReference>
<dbReference type="PDB" id="2QNO">
    <property type="method" value="X-ray"/>
    <property type="resolution" value="2.00 A"/>
    <property type="chains" value="A=30-658"/>
</dbReference>
<dbReference type="PDBsum" id="1F9D"/>
<dbReference type="PDBsum" id="1F9O"/>
<dbReference type="PDBsum" id="1FAE"/>
<dbReference type="PDBsum" id="1FBO"/>
<dbReference type="PDBsum" id="1FBW"/>
<dbReference type="PDBsum" id="1FCE"/>
<dbReference type="PDBsum" id="1G9G"/>
<dbReference type="PDBsum" id="1G9J"/>
<dbReference type="PDBsum" id="2QNO"/>
<dbReference type="SMR" id="P37698"/>
<dbReference type="STRING" id="394503.Ccel_0729"/>
<dbReference type="DrugBank" id="DB03857">
    <property type="generic name" value="1,4-dithio-beta-D-glucopyranose"/>
</dbReference>
<dbReference type="DrugBank" id="DB03584">
    <property type="generic name" value="4-Thio-beta-D-glucopyranose"/>
</dbReference>
<dbReference type="DrugBank" id="DB02379">
    <property type="generic name" value="Beta-D-Glucose"/>
</dbReference>
<dbReference type="DrugBank" id="DB02252">
    <property type="generic name" value="Iodobenzene"/>
</dbReference>
<dbReference type="DrugBank" id="DB01642">
    <property type="generic name" value="methyl beta-D-glucopyranoside"/>
</dbReference>
<dbReference type="CAZy" id="GH48">
    <property type="family name" value="Glycoside Hydrolase Family 48"/>
</dbReference>
<dbReference type="KEGG" id="cce:Ccel_0729"/>
<dbReference type="eggNOG" id="COG5297">
    <property type="taxonomic scope" value="Bacteria"/>
</dbReference>
<dbReference type="HOGENOM" id="CLU_009014_1_0_9"/>
<dbReference type="OrthoDB" id="33861at2"/>
<dbReference type="BRENDA" id="3.2.1.4">
    <property type="organism ID" value="1468"/>
</dbReference>
<dbReference type="EvolutionaryTrace" id="P37698"/>
<dbReference type="Proteomes" id="UP000001349">
    <property type="component" value="Chromosome"/>
</dbReference>
<dbReference type="GO" id="GO:0008810">
    <property type="term" value="F:cellulase activity"/>
    <property type="evidence" value="ECO:0007669"/>
    <property type="project" value="UniProtKB-EC"/>
</dbReference>
<dbReference type="GO" id="GO:0030245">
    <property type="term" value="P:cellulose catabolic process"/>
    <property type="evidence" value="ECO:0007669"/>
    <property type="project" value="UniProtKB-KW"/>
</dbReference>
<dbReference type="CDD" id="cd14256">
    <property type="entry name" value="Dockerin_I"/>
    <property type="match status" value="1"/>
</dbReference>
<dbReference type="Gene3D" id="1.50.10.10">
    <property type="match status" value="1"/>
</dbReference>
<dbReference type="Gene3D" id="1.10.1330.10">
    <property type="entry name" value="Dockerin domain"/>
    <property type="match status" value="1"/>
</dbReference>
<dbReference type="Gene3D" id="2.170.160.10">
    <property type="entry name" value="Endo-1,4-beta-glucanase f. Domain 2"/>
    <property type="match status" value="1"/>
</dbReference>
<dbReference type="Gene3D" id="4.10.870.10">
    <property type="entry name" value="Endo-1,4-beta-glucanase f. Domain 3"/>
    <property type="match status" value="1"/>
</dbReference>
<dbReference type="InterPro" id="IPR008928">
    <property type="entry name" value="6-hairpin_glycosidase_sf"/>
</dbReference>
<dbReference type="InterPro" id="IPR012341">
    <property type="entry name" value="6hp_glycosidase-like_sf"/>
</dbReference>
<dbReference type="InterPro" id="IPR002105">
    <property type="entry name" value="Dockerin_1_rpt"/>
</dbReference>
<dbReference type="InterPro" id="IPR016134">
    <property type="entry name" value="Dockerin_dom"/>
</dbReference>
<dbReference type="InterPro" id="IPR036439">
    <property type="entry name" value="Dockerin_dom_sf"/>
</dbReference>
<dbReference type="InterPro" id="IPR023309">
    <property type="entry name" value="Endo-1-4-beta-glucanase_dom2"/>
</dbReference>
<dbReference type="InterPro" id="IPR027390">
    <property type="entry name" value="Endoglucanase_F_dom3"/>
</dbReference>
<dbReference type="InterPro" id="IPR000556">
    <property type="entry name" value="Glyco_hydro_48F"/>
</dbReference>
<dbReference type="Pfam" id="PF00404">
    <property type="entry name" value="Dockerin_1"/>
    <property type="match status" value="1"/>
</dbReference>
<dbReference type="Pfam" id="PF02011">
    <property type="entry name" value="Glyco_hydro_48"/>
    <property type="match status" value="1"/>
</dbReference>
<dbReference type="PRINTS" id="PR00844">
    <property type="entry name" value="GLHYDRLASE48"/>
</dbReference>
<dbReference type="SUPFAM" id="SSF48208">
    <property type="entry name" value="Six-hairpin glycosidases"/>
    <property type="match status" value="1"/>
</dbReference>
<dbReference type="SUPFAM" id="SSF63446">
    <property type="entry name" value="Type I dockerin domain"/>
    <property type="match status" value="1"/>
</dbReference>
<dbReference type="PROSITE" id="PS00448">
    <property type="entry name" value="CLOS_CELLULOSOME_RPT"/>
    <property type="match status" value="2"/>
</dbReference>
<dbReference type="PROSITE" id="PS51766">
    <property type="entry name" value="DOCKERIN"/>
    <property type="match status" value="1"/>
</dbReference>
<dbReference type="PROSITE" id="PS00018">
    <property type="entry name" value="EF_HAND_1"/>
    <property type="match status" value="1"/>
</dbReference>
<feature type="signal peptide" evidence="1">
    <location>
        <begin position="1"/>
        <end position="29"/>
    </location>
</feature>
<feature type="chain" id="PRO_0000008026" description="Endoglucanase F">
    <location>
        <begin position="30"/>
        <end position="722"/>
    </location>
</feature>
<feature type="domain" description="Dockerin" evidence="2">
    <location>
        <begin position="661"/>
        <end position="722"/>
    </location>
</feature>
<feature type="region of interest" description="Disordered" evidence="3">
    <location>
        <begin position="142"/>
        <end position="165"/>
    </location>
</feature>
<feature type="compositionally biased region" description="Polar residues" evidence="3">
    <location>
        <begin position="154"/>
        <end position="165"/>
    </location>
</feature>
<feature type="helix" evidence="5">
    <location>
        <begin position="36"/>
        <end position="50"/>
    </location>
</feature>
<feature type="helix" evidence="5">
    <location>
        <begin position="52"/>
        <end position="54"/>
    </location>
</feature>
<feature type="strand" evidence="5">
    <location>
        <begin position="65"/>
        <end position="67"/>
    </location>
</feature>
<feature type="strand" evidence="5">
    <location>
        <begin position="73"/>
        <end position="77"/>
    </location>
</feature>
<feature type="strand" evidence="5">
    <location>
        <begin position="80"/>
        <end position="82"/>
    </location>
</feature>
<feature type="helix" evidence="5">
    <location>
        <begin position="83"/>
        <end position="100"/>
    </location>
</feature>
<feature type="helix" evidence="5">
    <location>
        <begin position="104"/>
        <end position="116"/>
    </location>
</feature>
<feature type="turn" evidence="5">
    <location>
        <begin position="121"/>
        <end position="123"/>
    </location>
</feature>
<feature type="helix" evidence="5">
    <location>
        <begin position="126"/>
        <end position="129"/>
    </location>
</feature>
<feature type="helix" evidence="5">
    <location>
        <begin position="147"/>
        <end position="149"/>
    </location>
</feature>
<feature type="strand" evidence="5">
    <location>
        <begin position="151"/>
        <end position="153"/>
    </location>
</feature>
<feature type="helix" evidence="5">
    <location>
        <begin position="166"/>
        <end position="173"/>
    </location>
</feature>
<feature type="strand" evidence="6">
    <location>
        <begin position="174"/>
        <end position="177"/>
    </location>
</feature>
<feature type="strand" evidence="5">
    <location>
        <begin position="182"/>
        <end position="186"/>
    </location>
</feature>
<feature type="strand" evidence="5">
    <location>
        <begin position="190"/>
        <end position="192"/>
    </location>
</feature>
<feature type="strand" evidence="5">
    <location>
        <begin position="202"/>
        <end position="207"/>
    </location>
</feature>
<feature type="helix" evidence="5">
    <location>
        <begin position="217"/>
        <end position="219"/>
    </location>
</feature>
<feature type="strand" evidence="5">
    <location>
        <begin position="223"/>
        <end position="227"/>
    </location>
</feature>
<feature type="strand" evidence="5">
    <location>
        <begin position="229"/>
        <end position="233"/>
    </location>
</feature>
<feature type="helix" evidence="5">
    <location>
        <begin position="238"/>
        <end position="240"/>
    </location>
</feature>
<feature type="strand" evidence="5">
    <location>
        <begin position="251"/>
        <end position="256"/>
    </location>
</feature>
<feature type="helix" evidence="5">
    <location>
        <begin position="258"/>
        <end position="276"/>
    </location>
</feature>
<feature type="turn" evidence="5">
    <location>
        <begin position="277"/>
        <end position="279"/>
    </location>
</feature>
<feature type="helix" evidence="5">
    <location>
        <begin position="283"/>
        <end position="295"/>
    </location>
</feature>
<feature type="helix" evidence="5">
    <location>
        <begin position="296"/>
        <end position="300"/>
    </location>
</feature>
<feature type="strand" evidence="5">
    <location>
        <begin position="310"/>
        <end position="314"/>
    </location>
</feature>
<feature type="helix" evidence="5">
    <location>
        <begin position="318"/>
        <end position="320"/>
    </location>
</feature>
<feature type="strand" evidence="5">
    <location>
        <begin position="330"/>
        <end position="337"/>
    </location>
</feature>
<feature type="strand" evidence="5">
    <location>
        <begin position="340"/>
        <end position="343"/>
    </location>
</feature>
<feature type="strand" evidence="5">
    <location>
        <begin position="346"/>
        <end position="349"/>
    </location>
</feature>
<feature type="helix" evidence="5">
    <location>
        <begin position="350"/>
        <end position="352"/>
    </location>
</feature>
<feature type="helix" evidence="5">
    <location>
        <begin position="355"/>
        <end position="363"/>
    </location>
</feature>
<feature type="helix" evidence="5">
    <location>
        <begin position="365"/>
        <end position="367"/>
    </location>
</feature>
<feature type="strand" evidence="5">
    <location>
        <begin position="370"/>
        <end position="373"/>
    </location>
</feature>
<feature type="helix" evidence="5">
    <location>
        <begin position="374"/>
        <end position="391"/>
    </location>
</feature>
<feature type="strand" evidence="5">
    <location>
        <begin position="395"/>
        <end position="397"/>
    </location>
</feature>
<feature type="strand" evidence="5">
    <location>
        <begin position="402"/>
        <end position="407"/>
    </location>
</feature>
<feature type="turn" evidence="5">
    <location>
        <begin position="408"/>
        <end position="411"/>
    </location>
</feature>
<feature type="strand" evidence="5">
    <location>
        <begin position="424"/>
        <end position="429"/>
    </location>
</feature>
<feature type="turn" evidence="5">
    <location>
        <begin position="433"/>
        <end position="438"/>
    </location>
</feature>
<feature type="helix" evidence="5">
    <location>
        <begin position="442"/>
        <end position="458"/>
    </location>
</feature>
<feature type="helix" evidence="5">
    <location>
        <begin position="461"/>
        <end position="475"/>
    </location>
</feature>
<feature type="strand" evidence="5">
    <location>
        <begin position="486"/>
        <end position="496"/>
    </location>
</feature>
<feature type="turn" evidence="5">
    <location>
        <begin position="503"/>
        <end position="505"/>
    </location>
</feature>
<feature type="strand" evidence="5">
    <location>
        <begin position="514"/>
        <end position="521"/>
    </location>
</feature>
<feature type="helix" evidence="5">
    <location>
        <begin position="524"/>
        <end position="541"/>
    </location>
</feature>
<feature type="helix" evidence="5">
    <location>
        <begin position="544"/>
        <end position="560"/>
    </location>
</feature>
<feature type="strand" evidence="5">
    <location>
        <begin position="561"/>
        <end position="563"/>
    </location>
</feature>
<feature type="strand" evidence="5">
    <location>
        <begin position="570"/>
        <end position="572"/>
    </location>
</feature>
<feature type="turn" evidence="5">
    <location>
        <begin position="574"/>
        <end position="577"/>
    </location>
</feature>
<feature type="helix" evidence="5">
    <location>
        <begin position="578"/>
        <end position="581"/>
    </location>
</feature>
<feature type="helix" evidence="5">
    <location>
        <begin position="606"/>
        <end position="609"/>
    </location>
</feature>
<feature type="helix" evidence="5">
    <location>
        <begin position="611"/>
        <end position="615"/>
    </location>
</feature>
<feature type="helix" evidence="5">
    <location>
        <begin position="619"/>
        <end position="627"/>
    </location>
</feature>
<feature type="strand" evidence="5">
    <location>
        <begin position="633"/>
        <end position="635"/>
    </location>
</feature>
<feature type="helix" evidence="5">
    <location>
        <begin position="639"/>
        <end position="655"/>
    </location>
</feature>
<evidence type="ECO:0000255" key="1"/>
<evidence type="ECO:0000255" key="2">
    <source>
        <dbReference type="PROSITE-ProRule" id="PRU01102"/>
    </source>
</evidence>
<evidence type="ECO:0000256" key="3">
    <source>
        <dbReference type="SAM" id="MobiDB-lite"/>
    </source>
</evidence>
<evidence type="ECO:0000305" key="4"/>
<evidence type="ECO:0007829" key="5">
    <source>
        <dbReference type="PDB" id="1G9G"/>
    </source>
</evidence>
<evidence type="ECO:0007829" key="6">
    <source>
        <dbReference type="PDB" id="2QNO"/>
    </source>
</evidence>
<comment type="function">
    <text>Probable endoglucanase involved in the degradation of cellulose or related beta-glucans.</text>
</comment>
<comment type="catalytic activity">
    <reaction>
        <text>Endohydrolysis of (1-&gt;4)-beta-D-glucosidic linkages in cellulose, lichenin and cereal beta-D-glucans.</text>
        <dbReference type="EC" id="3.2.1.4"/>
    </reaction>
</comment>
<comment type="similarity">
    <text evidence="4">Belongs to the glycosyl hydrolase 48 (cellulase L) family.</text>
</comment>
<reference key="1">
    <citation type="journal article" date="1996" name="Microbiology">
        <title>Molecular study and overexpression of the Clostridium cellulolyticum celF cellulase gene in Escherichia coli.</title>
        <authorList>
            <person name="Reverbel-Leroy C."/>
            <person name="Belaich A."/>
            <person name="Bernadac A."/>
            <person name="Gaudin C."/>
            <person name="Belaich J.-P."/>
            <person name="Tardif C."/>
        </authorList>
    </citation>
    <scope>NUCLEOTIDE SEQUENCE [GENOMIC DNA]</scope>
</reference>
<reference key="2">
    <citation type="submission" date="2009-01" db="EMBL/GenBank/DDBJ databases">
        <title>Complete sequence of Clostridium cellulolyticum H10.</title>
        <authorList>
            <consortium name="US DOE Joint Genome Institute"/>
            <person name="Lucas S."/>
            <person name="Copeland A."/>
            <person name="Lapidus A."/>
            <person name="Glavina del Rio T."/>
            <person name="Dalin E."/>
            <person name="Tice H."/>
            <person name="Bruce D."/>
            <person name="Goodwin L."/>
            <person name="Pitluck S."/>
            <person name="Chertkov O."/>
            <person name="Saunders E."/>
            <person name="Brettin T."/>
            <person name="Detter J.C."/>
            <person name="Han C."/>
            <person name="Larimer F."/>
            <person name="Land M."/>
            <person name="Hauser L."/>
            <person name="Kyrpides N."/>
            <person name="Ivanova N."/>
            <person name="Zhou J."/>
            <person name="Richardson P."/>
        </authorList>
    </citation>
    <scope>NUCLEOTIDE SEQUENCE [LARGE SCALE GENOMIC DNA]</scope>
    <source>
        <strain>ATCC 35319 / DSM 5812 / JCM 6584 / H10</strain>
    </source>
</reference>
<reference key="3">
    <citation type="journal article" date="1992" name="Gene">
        <title>Sequence analysis of a gene cluster encoding cellulases from Clostridium cellulolyticum.</title>
        <authorList>
            <person name="Bagnara-Tardif C."/>
            <person name="Gaudin C."/>
            <person name="Belaich A."/>
            <person name="Hoest P."/>
            <person name="Citard T."/>
            <person name="Belaich J.-P."/>
        </authorList>
    </citation>
    <scope>NUCLEOTIDE SEQUENCE [GENOMIC DNA] OF 387-722</scope>
</reference>
<accession>P37698</accession>
<accession>B8I7V1</accession>
<protein>
    <recommendedName>
        <fullName>Endoglucanase F</fullName>
        <ecNumber>3.2.1.4</ecNumber>
    </recommendedName>
    <alternativeName>
        <fullName>Cellulase F</fullName>
    </alternativeName>
    <alternativeName>
        <fullName>EGCCF</fullName>
    </alternativeName>
    <alternativeName>
        <fullName>Endo-1,4-beta-glucanase F</fullName>
    </alternativeName>
</protein>
<proteinExistence type="evidence at protein level"/>
<keyword id="KW-0002">3D-structure</keyword>
<keyword id="KW-0119">Carbohydrate metabolism</keyword>
<keyword id="KW-0136">Cellulose degradation</keyword>
<keyword id="KW-0326">Glycosidase</keyword>
<keyword id="KW-0378">Hydrolase</keyword>
<keyword id="KW-0624">Polysaccharide degradation</keyword>
<keyword id="KW-1185">Reference proteome</keyword>
<keyword id="KW-0732">Signal</keyword>
<sequence>MSKNFKRVGAVAVAAAMSLSIMATTSINAASSPANKVYQDRFESMYSKIKDPANGYFSEQGIPYHSIETLMVEAPDYGHVTTSEAMSYYMWLEAMHGRFSGDFTGFDKSWSVTEQYLIPTEKDQPNTSMSRYDANKPATYAPEFQDPSKYPSPLDTSQPVGRDPINSQLTSAYGTSMLYGMHWILDVDNWYGFGARADGTSKPSYINTFQRGEQESTWETIPQPCWDEHKFGGQYGFLDLFTKDTGTPAKQFKYTNAPDADARAVQATYWADQWAKEQGKSVSTSVGKATKMGDYLRYSFFDKYFRKIGQPSQAGTGYDAAHYLLSWYYAWGGGIDSTWSWIIGSSHNHFGYQNPFAAWVLSTDANFKPKSSNGASDWAKSLDRQLEFYQWLQSAEGAIAGGATNSWNGRYEAVPSGTSTFYGMGYVENPVYADPGSNTWFGMQVWSMQRVAELYYKTGDARAKKLLDKWAKWINGEIKFNADGTFQIPSTIDWEGQPDTWNPTQGYTGNANLHVKVVNYGTDLGCASSLANTLTYYAAKSGDETSRQNAQKLLDAMWNNYSDSKGISTVEQRGDYHRFLDQEVFVPAGWTGKMPNGDVIKSGVKFIDIRSKYKQDPEWQTMVAALQAGQVPTQRLHRFWAQSEFAVANGVYAILFPDQGPEKLLGDVNGDETVDAIDLAILKKYLLNSSTTINTANADMNSDNAIDAIDYALLKKALLSIQ</sequence>
<name>GUNF_RUMCH</name>
<organism>
    <name type="scientific">Ruminiclostridium cellulolyticum (strain ATCC 35319 / DSM 5812 / JCM 6584 / H10)</name>
    <name type="common">Clostridium cellulolyticum</name>
    <dbReference type="NCBI Taxonomy" id="394503"/>
    <lineage>
        <taxon>Bacteria</taxon>
        <taxon>Bacillati</taxon>
        <taxon>Bacillota</taxon>
        <taxon>Clostridia</taxon>
        <taxon>Eubacteriales</taxon>
        <taxon>Oscillospiraceae</taxon>
        <taxon>Ruminiclostridium</taxon>
    </lineage>
</organism>